<reference key="1">
    <citation type="journal article" date="1992" name="J. Mol. Biol.">
        <title>Sequences of 20 subunits of NADH:ubiquinone oxidoreductase from bovine heart mitochondria. Application of a novel strategy for sequencing proteins using the polymerase chain reaction.</title>
        <authorList>
            <person name="Walker J.E."/>
            <person name="Arizmendi J.M."/>
            <person name="Dupuis A."/>
            <person name="Fearnley I.M."/>
            <person name="Finel M."/>
            <person name="Medd S.M."/>
            <person name="Pilkington S.J."/>
            <person name="Runswick M.J."/>
            <person name="Skehel J.M."/>
        </authorList>
    </citation>
    <scope>NUCLEOTIDE SEQUENCE [MRNA]</scope>
    <scope>PARTIAL PROTEIN SEQUENCE</scope>
    <source>
        <tissue>Heart</tissue>
    </source>
</reference>
<reference key="2">
    <citation type="submission" date="2005-01" db="EMBL/GenBank/DDBJ databases">
        <title>Analysis of sequences obtained from constructed full-length bovine cDNA libraries.</title>
        <authorList>
            <person name="Yu J."/>
            <person name="Meng Y."/>
            <person name="Wang Z."/>
            <person name="Hansen C."/>
            <person name="Li C."/>
            <person name="Moore S.S."/>
        </authorList>
    </citation>
    <scope>NUCLEOTIDE SEQUENCE [LARGE SCALE MRNA]</scope>
    <source>
        <tissue>Lymphoid epithelium</tissue>
    </source>
</reference>
<reference key="3">
    <citation type="submission" date="2005-08" db="EMBL/GenBank/DDBJ databases">
        <authorList>
            <consortium name="NIH - Mammalian Gene Collection (MGC) project"/>
        </authorList>
    </citation>
    <scope>NUCLEOTIDE SEQUENCE [LARGE SCALE MRNA]</scope>
    <source>
        <strain>Crossbred X Angus</strain>
        <tissue>Liver</tissue>
    </source>
</reference>
<reference key="4">
    <citation type="journal article" date="2000" name="Biochemistry">
        <title>Resolution of the membrane domain of bovine complex I into subcomplexes: implications for the structural organization of the enzyme.</title>
        <authorList>
            <person name="Sazanov L.A."/>
            <person name="Peak-Chew S.Y."/>
            <person name="Fearnley I.M."/>
            <person name="Walker J.E."/>
        </authorList>
    </citation>
    <scope>PARTIAL PROTEIN SEQUENCE</scope>
    <scope>SUBUNIT</scope>
    <scope>IDENTIFICATION IN COMPLEX I</scope>
    <scope>SUBCELLULAR LOCATION</scope>
</reference>
<reference key="5">
    <citation type="journal article" date="2008" name="Anal. Biochem.">
        <title>Subunit analysis of bovine heart complex I by reversed-phase high-performance liquid chromatography, electrospray ionization-tandem mass spectrometry, and matrix-assisted laser desorption/ionization-time-of-flight mass spectrometry.</title>
        <authorList>
            <person name="Lemma-Gray P."/>
            <person name="Valusova E."/>
            <person name="Carroll C.A."/>
            <person name="Weintraub S.T."/>
            <person name="Musatov A."/>
            <person name="Robinson N.C."/>
        </authorList>
    </citation>
    <scope>SUBUNIT</scope>
    <scope>IDENTIFICATION IN COMPLEX I</scope>
    <scope>SUBCELLULAR LOCATION</scope>
</reference>
<name>NDUB8_BOVIN</name>
<feature type="transit peptide" description="Mitochondrion">
    <location>
        <begin position="1"/>
        <end position="28"/>
    </location>
</feature>
<feature type="chain" id="PRO_0000020045" description="NADH dehydrogenase [ubiquinone] 1 beta subcomplex subunit 8, mitochondrial">
    <location>
        <begin position="29"/>
        <end position="186"/>
    </location>
</feature>
<feature type="transmembrane region" description="Helical" evidence="2">
    <location>
        <begin position="133"/>
        <end position="153"/>
    </location>
</feature>
<feature type="helix" evidence="9">
    <location>
        <begin position="34"/>
        <end position="36"/>
    </location>
</feature>
<feature type="helix" evidence="9">
    <location>
        <begin position="45"/>
        <end position="54"/>
    </location>
</feature>
<feature type="turn" evidence="9">
    <location>
        <begin position="59"/>
        <end position="61"/>
    </location>
</feature>
<feature type="strand" evidence="9">
    <location>
        <begin position="68"/>
        <end position="71"/>
    </location>
</feature>
<feature type="helix" evidence="9">
    <location>
        <begin position="83"/>
        <end position="85"/>
    </location>
</feature>
<feature type="strand" evidence="10">
    <location>
        <begin position="88"/>
        <end position="90"/>
    </location>
</feature>
<feature type="turn" evidence="9">
    <location>
        <begin position="95"/>
        <end position="98"/>
    </location>
</feature>
<feature type="helix" evidence="9">
    <location>
        <begin position="109"/>
        <end position="112"/>
    </location>
</feature>
<feature type="turn" evidence="11">
    <location>
        <begin position="114"/>
        <end position="116"/>
    </location>
</feature>
<feature type="helix" evidence="9">
    <location>
        <begin position="126"/>
        <end position="149"/>
    </location>
</feature>
<feature type="helix" evidence="9">
    <location>
        <begin position="162"/>
        <end position="166"/>
    </location>
</feature>
<feature type="turn" evidence="9">
    <location>
        <begin position="167"/>
        <end position="171"/>
    </location>
</feature>
<feature type="strand" evidence="9">
    <location>
        <begin position="174"/>
        <end position="176"/>
    </location>
</feature>
<organism>
    <name type="scientific">Bos taurus</name>
    <name type="common">Bovine</name>
    <dbReference type="NCBI Taxonomy" id="9913"/>
    <lineage>
        <taxon>Eukaryota</taxon>
        <taxon>Metazoa</taxon>
        <taxon>Chordata</taxon>
        <taxon>Craniata</taxon>
        <taxon>Vertebrata</taxon>
        <taxon>Euteleostomi</taxon>
        <taxon>Mammalia</taxon>
        <taxon>Eutheria</taxon>
        <taxon>Laurasiatheria</taxon>
        <taxon>Artiodactyla</taxon>
        <taxon>Ruminantia</taxon>
        <taxon>Pecora</taxon>
        <taxon>Bovidae</taxon>
        <taxon>Bovinae</taxon>
        <taxon>Bos</taxon>
    </lineage>
</organism>
<sequence>MAAARAGVLGVRWLQKAARNVVPLGARTASHITKDMLPGPYPKTPEERAAAAKKYNMRVEDYEPYPDDGTGYGDYPKLPDRSQQERDPWYDWDHPDLRLNWGEPMHWDLDMYIRNRVDTSPTPVNWNLMCKHLFGFVAFMLFMFWVGETYPAYQPVGPKQYPYNNLYLERGGDPNKEPEPVVHYEI</sequence>
<dbReference type="EMBL" id="X63209">
    <property type="protein sequence ID" value="CAA44894.1"/>
    <property type="molecule type" value="mRNA"/>
</dbReference>
<dbReference type="EMBL" id="AY911318">
    <property type="protein sequence ID" value="AAW82086.1"/>
    <property type="molecule type" value="mRNA"/>
</dbReference>
<dbReference type="EMBL" id="BC103425">
    <property type="protein sequence ID" value="AAI03426.1"/>
    <property type="molecule type" value="mRNA"/>
</dbReference>
<dbReference type="PIR" id="S28242">
    <property type="entry name" value="S28242"/>
</dbReference>
<dbReference type="RefSeq" id="NP_777092.1">
    <property type="nucleotide sequence ID" value="NM_174667.3"/>
</dbReference>
<dbReference type="PDB" id="7DGQ">
    <property type="method" value="EM"/>
    <property type="resolution" value="5.00 A"/>
    <property type="chains" value="e=29-186"/>
</dbReference>
<dbReference type="PDB" id="7DGR">
    <property type="method" value="EM"/>
    <property type="resolution" value="4.60 A"/>
    <property type="chains" value="e=29-186"/>
</dbReference>
<dbReference type="PDB" id="7DGS">
    <property type="method" value="EM"/>
    <property type="resolution" value="7.80 A"/>
    <property type="chains" value="e=29-186"/>
</dbReference>
<dbReference type="PDB" id="7DGZ">
    <property type="method" value="EM"/>
    <property type="resolution" value="3.80 A"/>
    <property type="chains" value="e=29-186"/>
</dbReference>
<dbReference type="PDB" id="7DH0">
    <property type="method" value="EM"/>
    <property type="resolution" value="4.20 A"/>
    <property type="chains" value="e=29-186"/>
</dbReference>
<dbReference type="PDB" id="7DKF">
    <property type="method" value="EM"/>
    <property type="resolution" value="8.30 A"/>
    <property type="chains" value="e2=29-186"/>
</dbReference>
<dbReference type="PDB" id="7QSD">
    <property type="method" value="EM"/>
    <property type="resolution" value="3.10 A"/>
    <property type="chains" value="l=1-186"/>
</dbReference>
<dbReference type="PDB" id="7QSK">
    <property type="method" value="EM"/>
    <property type="resolution" value="2.84 A"/>
    <property type="chains" value="l=1-186"/>
</dbReference>
<dbReference type="PDB" id="7QSL">
    <property type="method" value="EM"/>
    <property type="resolution" value="2.76 A"/>
    <property type="chains" value="l=1-186"/>
</dbReference>
<dbReference type="PDB" id="7QSM">
    <property type="method" value="EM"/>
    <property type="resolution" value="2.30 A"/>
    <property type="chains" value="l=1-186"/>
</dbReference>
<dbReference type="PDB" id="7QSN">
    <property type="method" value="EM"/>
    <property type="resolution" value="2.81 A"/>
    <property type="chains" value="l=1-186"/>
</dbReference>
<dbReference type="PDB" id="7QSO">
    <property type="method" value="EM"/>
    <property type="resolution" value="3.02 A"/>
    <property type="chains" value="l=1-186"/>
</dbReference>
<dbReference type="PDB" id="7R41">
    <property type="method" value="EM"/>
    <property type="resolution" value="2.30 A"/>
    <property type="chains" value="l=1-186"/>
</dbReference>
<dbReference type="PDB" id="7R42">
    <property type="method" value="EM"/>
    <property type="resolution" value="2.30 A"/>
    <property type="chains" value="l=1-186"/>
</dbReference>
<dbReference type="PDB" id="7R43">
    <property type="method" value="EM"/>
    <property type="resolution" value="2.40 A"/>
    <property type="chains" value="l=1-186"/>
</dbReference>
<dbReference type="PDB" id="7R44">
    <property type="method" value="EM"/>
    <property type="resolution" value="2.40 A"/>
    <property type="chains" value="l=1-186"/>
</dbReference>
<dbReference type="PDB" id="7R45">
    <property type="method" value="EM"/>
    <property type="resolution" value="2.40 A"/>
    <property type="chains" value="l=1-186"/>
</dbReference>
<dbReference type="PDB" id="7R46">
    <property type="method" value="EM"/>
    <property type="resolution" value="2.40 A"/>
    <property type="chains" value="l=1-186"/>
</dbReference>
<dbReference type="PDB" id="7R47">
    <property type="method" value="EM"/>
    <property type="resolution" value="2.30 A"/>
    <property type="chains" value="l=1-186"/>
</dbReference>
<dbReference type="PDB" id="7R48">
    <property type="method" value="EM"/>
    <property type="resolution" value="2.30 A"/>
    <property type="chains" value="l=1-186"/>
</dbReference>
<dbReference type="PDB" id="7R4C">
    <property type="method" value="EM"/>
    <property type="resolution" value="2.30 A"/>
    <property type="chains" value="l=1-186"/>
</dbReference>
<dbReference type="PDB" id="7R4D">
    <property type="method" value="EM"/>
    <property type="resolution" value="2.30 A"/>
    <property type="chains" value="l=1-186"/>
</dbReference>
<dbReference type="PDB" id="7R4F">
    <property type="method" value="EM"/>
    <property type="resolution" value="2.40 A"/>
    <property type="chains" value="l=1-186"/>
</dbReference>
<dbReference type="PDB" id="7R4G">
    <property type="method" value="EM"/>
    <property type="resolution" value="2.50 A"/>
    <property type="chains" value="l=1-186"/>
</dbReference>
<dbReference type="PDB" id="8Q0A">
    <property type="method" value="EM"/>
    <property type="resolution" value="3.10 A"/>
    <property type="chains" value="l=1-186"/>
</dbReference>
<dbReference type="PDB" id="8Q0F">
    <property type="method" value="EM"/>
    <property type="resolution" value="3.10 A"/>
    <property type="chains" value="l=1-186"/>
</dbReference>
<dbReference type="PDB" id="8Q0J">
    <property type="method" value="EM"/>
    <property type="resolution" value="3.80 A"/>
    <property type="chains" value="l=1-186"/>
</dbReference>
<dbReference type="PDB" id="8Q0M">
    <property type="method" value="EM"/>
    <property type="resolution" value="3.10 A"/>
    <property type="chains" value="l=1-186"/>
</dbReference>
<dbReference type="PDB" id="8Q0O">
    <property type="method" value="EM"/>
    <property type="resolution" value="3.10 A"/>
    <property type="chains" value="l=1-186"/>
</dbReference>
<dbReference type="PDB" id="8Q0Q">
    <property type="method" value="EM"/>
    <property type="resolution" value="3.60 A"/>
    <property type="chains" value="l=1-186"/>
</dbReference>
<dbReference type="PDB" id="8Q1P">
    <property type="method" value="EM"/>
    <property type="resolution" value="2.90 A"/>
    <property type="chains" value="l=1-186"/>
</dbReference>
<dbReference type="PDB" id="8Q1U">
    <property type="method" value="EM"/>
    <property type="resolution" value="3.30 A"/>
    <property type="chains" value="l=1-186"/>
</dbReference>
<dbReference type="PDB" id="8Q1Y">
    <property type="method" value="EM"/>
    <property type="resolution" value="2.60 A"/>
    <property type="chains" value="l=1-186"/>
</dbReference>
<dbReference type="PDB" id="8Q25">
    <property type="method" value="EM"/>
    <property type="resolution" value="2.80 A"/>
    <property type="chains" value="l=1-186"/>
</dbReference>
<dbReference type="PDB" id="8Q45">
    <property type="method" value="EM"/>
    <property type="resolution" value="2.70 A"/>
    <property type="chains" value="l=1-186"/>
</dbReference>
<dbReference type="PDB" id="8Q46">
    <property type="method" value="EM"/>
    <property type="resolution" value="2.60 A"/>
    <property type="chains" value="l=1-186"/>
</dbReference>
<dbReference type="PDB" id="8Q47">
    <property type="method" value="EM"/>
    <property type="resolution" value="2.90 A"/>
    <property type="chains" value="l=1-186"/>
</dbReference>
<dbReference type="PDB" id="8Q48">
    <property type="method" value="EM"/>
    <property type="resolution" value="2.50 A"/>
    <property type="chains" value="l=1-186"/>
</dbReference>
<dbReference type="PDB" id="8Q49">
    <property type="method" value="EM"/>
    <property type="resolution" value="2.60 A"/>
    <property type="chains" value="l=1-186"/>
</dbReference>
<dbReference type="PDB" id="8Q4A">
    <property type="method" value="EM"/>
    <property type="resolution" value="2.60 A"/>
    <property type="chains" value="l=1-186"/>
</dbReference>
<dbReference type="PDBsum" id="7DGQ"/>
<dbReference type="PDBsum" id="7DGR"/>
<dbReference type="PDBsum" id="7DGS"/>
<dbReference type="PDBsum" id="7DGZ"/>
<dbReference type="PDBsum" id="7DH0"/>
<dbReference type="PDBsum" id="7DKF"/>
<dbReference type="PDBsum" id="7QSD"/>
<dbReference type="PDBsum" id="7QSK"/>
<dbReference type="PDBsum" id="7QSL"/>
<dbReference type="PDBsum" id="7QSM"/>
<dbReference type="PDBsum" id="7QSN"/>
<dbReference type="PDBsum" id="7QSO"/>
<dbReference type="PDBsum" id="7R41"/>
<dbReference type="PDBsum" id="7R42"/>
<dbReference type="PDBsum" id="7R43"/>
<dbReference type="PDBsum" id="7R44"/>
<dbReference type="PDBsum" id="7R45"/>
<dbReference type="PDBsum" id="7R46"/>
<dbReference type="PDBsum" id="7R47"/>
<dbReference type="PDBsum" id="7R48"/>
<dbReference type="PDBsum" id="7R4C"/>
<dbReference type="PDBsum" id="7R4D"/>
<dbReference type="PDBsum" id="7R4F"/>
<dbReference type="PDBsum" id="7R4G"/>
<dbReference type="PDBsum" id="8Q0A"/>
<dbReference type="PDBsum" id="8Q0F"/>
<dbReference type="PDBsum" id="8Q0J"/>
<dbReference type="PDBsum" id="8Q0M"/>
<dbReference type="PDBsum" id="8Q0O"/>
<dbReference type="PDBsum" id="8Q0Q"/>
<dbReference type="PDBsum" id="8Q1P"/>
<dbReference type="PDBsum" id="8Q1U"/>
<dbReference type="PDBsum" id="8Q1Y"/>
<dbReference type="PDBsum" id="8Q25"/>
<dbReference type="PDBsum" id="8Q45"/>
<dbReference type="PDBsum" id="8Q46"/>
<dbReference type="PDBsum" id="8Q47"/>
<dbReference type="PDBsum" id="8Q48"/>
<dbReference type="PDBsum" id="8Q49"/>
<dbReference type="PDBsum" id="8Q4A"/>
<dbReference type="EMDB" id="EMD-14127"/>
<dbReference type="EMDB" id="EMD-14132"/>
<dbReference type="EMDB" id="EMD-14133"/>
<dbReference type="EMDB" id="EMD-14134"/>
<dbReference type="EMDB" id="EMD-14139"/>
<dbReference type="EMDB" id="EMD-14140"/>
<dbReference type="EMDB" id="EMD-14251"/>
<dbReference type="EMDB" id="EMD-14256"/>
<dbReference type="EMDB" id="EMD-14261"/>
<dbReference type="EMDB" id="EMD-14266"/>
<dbReference type="EMDB" id="EMD-14272"/>
<dbReference type="EMDB" id="EMD-14277"/>
<dbReference type="EMDB" id="EMD-14282"/>
<dbReference type="EMDB" id="EMD-14287"/>
<dbReference type="EMDB" id="EMD-14292"/>
<dbReference type="EMDB" id="EMD-14297"/>
<dbReference type="EMDB" id="EMD-14302"/>
<dbReference type="EMDB" id="EMD-14307"/>
<dbReference type="EMDB" id="EMD-18051"/>
<dbReference type="EMDB" id="EMD-18052"/>
<dbReference type="EMDB" id="EMD-18054"/>
<dbReference type="EMDB" id="EMD-18055"/>
<dbReference type="EMDB" id="EMD-18057"/>
<dbReference type="EMDB" id="EMD-18059"/>
<dbReference type="EMDB" id="EMD-18066"/>
<dbReference type="EMDB" id="EMD-18067"/>
<dbReference type="EMDB" id="EMD-18068"/>
<dbReference type="EMDB" id="EMD-18069"/>
<dbReference type="EMDB" id="EMD-18138"/>
<dbReference type="EMDB" id="EMD-18139"/>
<dbReference type="EMDB" id="EMD-18140"/>
<dbReference type="EMDB" id="EMD-18141"/>
<dbReference type="EMDB" id="EMD-18142"/>
<dbReference type="EMDB" id="EMD-18143"/>
<dbReference type="EMDB" id="EMD-30673"/>
<dbReference type="EMDB" id="EMD-30674"/>
<dbReference type="EMDB" id="EMD-30675"/>
<dbReference type="EMDB" id="EMD-30676"/>
<dbReference type="EMDB" id="EMD-30677"/>
<dbReference type="EMDB" id="EMD-30706"/>
<dbReference type="SMR" id="Q02372"/>
<dbReference type="CORUM" id="Q02372"/>
<dbReference type="DIP" id="DIP-38814N"/>
<dbReference type="FunCoup" id="Q02372">
    <property type="interactions" value="1589"/>
</dbReference>
<dbReference type="IntAct" id="Q02372">
    <property type="interactions" value="2"/>
</dbReference>
<dbReference type="STRING" id="9913.ENSBTAP00000000100"/>
<dbReference type="TCDB" id="3.D.1.6.1">
    <property type="family name" value="the h+ or na+-translocating nadh dehydrogenase (ndh) family"/>
</dbReference>
<dbReference type="GlyGen" id="Q02372">
    <property type="glycosylation" value="1 site, 1 O-linked glycan (1 site)"/>
</dbReference>
<dbReference type="PaxDb" id="9913-ENSBTAP00000000100"/>
<dbReference type="Ensembl" id="ENSBTAT00000000100.3">
    <property type="protein sequence ID" value="ENSBTAP00000000100.1"/>
    <property type="gene ID" value="ENSBTAG00000000091.3"/>
</dbReference>
<dbReference type="GeneID" id="282517"/>
<dbReference type="KEGG" id="bta:282517"/>
<dbReference type="CTD" id="4714"/>
<dbReference type="VEuPathDB" id="HostDB:ENSBTAG00000000091"/>
<dbReference type="eggNOG" id="KOG4040">
    <property type="taxonomic scope" value="Eukaryota"/>
</dbReference>
<dbReference type="GeneTree" id="ENSGT00390000000628"/>
<dbReference type="HOGENOM" id="CLU_108654_1_0_1"/>
<dbReference type="InParanoid" id="Q02372"/>
<dbReference type="OMA" id="WHTMRNH"/>
<dbReference type="OrthoDB" id="2014058at2759"/>
<dbReference type="TreeFam" id="TF317319"/>
<dbReference type="Reactome" id="R-BTA-1268020">
    <property type="pathway name" value="Mitochondrial protein import"/>
</dbReference>
<dbReference type="Reactome" id="R-BTA-611105">
    <property type="pathway name" value="Respiratory electron transport"/>
</dbReference>
<dbReference type="Reactome" id="R-BTA-6799198">
    <property type="pathway name" value="Complex I biogenesis"/>
</dbReference>
<dbReference type="Proteomes" id="UP000009136">
    <property type="component" value="Chromosome 26"/>
</dbReference>
<dbReference type="Bgee" id="ENSBTAG00000000091">
    <property type="expression patterns" value="Expressed in tongue muscle and 103 other cell types or tissues"/>
</dbReference>
<dbReference type="GO" id="GO:0005743">
    <property type="term" value="C:mitochondrial inner membrane"/>
    <property type="evidence" value="ECO:0000305"/>
    <property type="project" value="UniProtKB"/>
</dbReference>
<dbReference type="GO" id="GO:0045271">
    <property type="term" value="C:respiratory chain complex I"/>
    <property type="evidence" value="ECO:0000314"/>
    <property type="project" value="UniProtKB"/>
</dbReference>
<dbReference type="GO" id="GO:0006120">
    <property type="term" value="P:mitochondrial electron transport, NADH to ubiquinone"/>
    <property type="evidence" value="ECO:0007669"/>
    <property type="project" value="InterPro"/>
</dbReference>
<dbReference type="InterPro" id="IPR008699">
    <property type="entry name" value="NDUFB8"/>
</dbReference>
<dbReference type="InterPro" id="IPR016551">
    <property type="entry name" value="Ndufb8_metazoa"/>
</dbReference>
<dbReference type="PANTHER" id="PTHR12840:SF1">
    <property type="entry name" value="NADH DEHYDROGENASE [UBIQUINONE] 1 BETA SUBCOMPLEX SUBUNIT 8, MITOCHONDRIAL"/>
    <property type="match status" value="1"/>
</dbReference>
<dbReference type="PANTHER" id="PTHR12840">
    <property type="entry name" value="NADH-UBIQUINONE OXIDOREDUCTASE ASHI SUBUNIT"/>
    <property type="match status" value="1"/>
</dbReference>
<dbReference type="Pfam" id="PF05821">
    <property type="entry name" value="NDUF_B8"/>
    <property type="match status" value="1"/>
</dbReference>
<dbReference type="PIRSF" id="PIRSF009288">
    <property type="entry name" value="NDUB8"/>
    <property type="match status" value="1"/>
</dbReference>
<keyword id="KW-0002">3D-structure</keyword>
<keyword id="KW-0903">Direct protein sequencing</keyword>
<keyword id="KW-0249">Electron transport</keyword>
<keyword id="KW-0472">Membrane</keyword>
<keyword id="KW-0496">Mitochondrion</keyword>
<keyword id="KW-0999">Mitochondrion inner membrane</keyword>
<keyword id="KW-1185">Reference proteome</keyword>
<keyword id="KW-0679">Respiratory chain</keyword>
<keyword id="KW-0809">Transit peptide</keyword>
<keyword id="KW-0812">Transmembrane</keyword>
<keyword id="KW-1133">Transmembrane helix</keyword>
<keyword id="KW-0813">Transport</keyword>
<proteinExistence type="evidence at protein level"/>
<comment type="function">
    <text evidence="1">Accessory subunit of the mitochondrial membrane respiratory chain NADH dehydrogenase (Complex I), that is believed not to be involved in catalysis. Complex I functions in the transfer of electrons from NADH to the respiratory chain. The immediate electron acceptor for the enzyme is believed to be ubiquinone.</text>
</comment>
<comment type="subunit">
    <text evidence="3 4 5">Complex I is composed of 45 different subunits.</text>
</comment>
<comment type="subcellular location">
    <subcellularLocation>
        <location evidence="7 8">Mitochondrion inner membrane</location>
        <topology evidence="2">Single-pass membrane protein</topology>
        <orientation evidence="6">Matrix side</orientation>
    </subcellularLocation>
</comment>
<comment type="similarity">
    <text evidence="6">Belongs to the complex I NDUFB8 subunit family.</text>
</comment>
<evidence type="ECO:0000250" key="1">
    <source>
        <dbReference type="UniProtKB" id="O95169"/>
    </source>
</evidence>
<evidence type="ECO:0000255" key="2"/>
<evidence type="ECO:0000269" key="3">
    <source>
    </source>
</evidence>
<evidence type="ECO:0000269" key="4">
    <source>
    </source>
</evidence>
<evidence type="ECO:0000269" key="5">
    <source>
    </source>
</evidence>
<evidence type="ECO:0000305" key="6"/>
<evidence type="ECO:0000305" key="7">
    <source>
    </source>
</evidence>
<evidence type="ECO:0000305" key="8">
    <source>
    </source>
</evidence>
<evidence type="ECO:0007829" key="9">
    <source>
        <dbReference type="PDB" id="7QSM"/>
    </source>
</evidence>
<evidence type="ECO:0007829" key="10">
    <source>
        <dbReference type="PDB" id="8Q48"/>
    </source>
</evidence>
<evidence type="ECO:0007829" key="11">
    <source>
        <dbReference type="PDB" id="8Q4A"/>
    </source>
</evidence>
<accession>Q02372</accession>
<accession>Q3SYR9</accession>
<accession>Q56K09</accession>
<gene>
    <name type="primary">NDUFB8</name>
</gene>
<protein>
    <recommendedName>
        <fullName>NADH dehydrogenase [ubiquinone] 1 beta subcomplex subunit 8, mitochondrial</fullName>
    </recommendedName>
    <alternativeName>
        <fullName>Complex I-ASHI</fullName>
        <shortName>CI-ASHI</shortName>
    </alternativeName>
    <alternativeName>
        <fullName>NADH-ubiquinone oxidoreductase ASHI subunit</fullName>
    </alternativeName>
</protein>